<feature type="chain" id="PRO_0000213906" description="Zinc finger CCCH domain-containing protein 11A">
    <location>
        <begin position="1"/>
        <end position="792"/>
    </location>
</feature>
<feature type="zinc finger region" description="C3H1-type 1" evidence="3">
    <location>
        <begin position="2"/>
        <end position="29"/>
    </location>
</feature>
<feature type="zinc finger region" description="C3H1-type 2" evidence="3">
    <location>
        <begin position="31"/>
        <end position="57"/>
    </location>
</feature>
<feature type="zinc finger region" description="C3H1-type 3" evidence="3">
    <location>
        <begin position="60"/>
        <end position="87"/>
    </location>
</feature>
<feature type="region of interest" description="Disordered" evidence="4">
    <location>
        <begin position="103"/>
        <end position="191"/>
    </location>
</feature>
<feature type="region of interest" description="Disordered" evidence="4">
    <location>
        <begin position="223"/>
        <end position="331"/>
    </location>
</feature>
<feature type="region of interest" description="Disordered" evidence="4">
    <location>
        <begin position="345"/>
        <end position="443"/>
    </location>
</feature>
<feature type="region of interest" description="Disordered" evidence="4">
    <location>
        <begin position="458"/>
        <end position="531"/>
    </location>
</feature>
<feature type="region of interest" description="Disordered" evidence="4">
    <location>
        <begin position="545"/>
        <end position="571"/>
    </location>
</feature>
<feature type="region of interest" description="Disordered" evidence="4">
    <location>
        <begin position="690"/>
        <end position="750"/>
    </location>
</feature>
<feature type="coiled-coil region" evidence="2">
    <location>
        <begin position="338"/>
        <end position="360"/>
    </location>
</feature>
<feature type="compositionally biased region" description="Polar residues" evidence="4">
    <location>
        <begin position="115"/>
        <end position="135"/>
    </location>
</feature>
<feature type="compositionally biased region" description="Acidic residues" evidence="4">
    <location>
        <begin position="160"/>
        <end position="175"/>
    </location>
</feature>
<feature type="compositionally biased region" description="Basic and acidic residues" evidence="4">
    <location>
        <begin position="308"/>
        <end position="331"/>
    </location>
</feature>
<feature type="compositionally biased region" description="Basic and acidic residues" evidence="4">
    <location>
        <begin position="345"/>
        <end position="360"/>
    </location>
</feature>
<feature type="compositionally biased region" description="Low complexity" evidence="4">
    <location>
        <begin position="367"/>
        <end position="376"/>
    </location>
</feature>
<feature type="compositionally biased region" description="Basic and acidic residues" evidence="4">
    <location>
        <begin position="393"/>
        <end position="405"/>
    </location>
</feature>
<feature type="compositionally biased region" description="Basic and acidic residues" evidence="4">
    <location>
        <begin position="431"/>
        <end position="443"/>
    </location>
</feature>
<feature type="compositionally biased region" description="Polar residues" evidence="4">
    <location>
        <begin position="461"/>
        <end position="473"/>
    </location>
</feature>
<feature type="compositionally biased region" description="Basic and acidic residues" evidence="4">
    <location>
        <begin position="492"/>
        <end position="501"/>
    </location>
</feature>
<feature type="compositionally biased region" description="Basic and acidic residues" evidence="4">
    <location>
        <begin position="545"/>
        <end position="558"/>
    </location>
</feature>
<feature type="compositionally biased region" description="Polar residues" evidence="4">
    <location>
        <begin position="698"/>
        <end position="715"/>
    </location>
</feature>
<feature type="compositionally biased region" description="Low complexity" evidence="4">
    <location>
        <begin position="717"/>
        <end position="730"/>
    </location>
</feature>
<feature type="modified residue" description="Phosphoserine" evidence="1">
    <location>
        <position position="108"/>
    </location>
</feature>
<feature type="modified residue" description="Phosphoserine" evidence="8">
    <location>
        <position position="132"/>
    </location>
</feature>
<feature type="modified residue" description="Phosphoserine" evidence="8">
    <location>
        <position position="149"/>
    </location>
</feature>
<feature type="modified residue" description="Phosphoserine" evidence="8">
    <location>
        <position position="171"/>
    </location>
</feature>
<feature type="modified residue" description="Phosphoserine" evidence="1">
    <location>
        <position position="289"/>
    </location>
</feature>
<feature type="modified residue" description="Phosphoserine" evidence="1">
    <location>
        <position position="346"/>
    </location>
</feature>
<feature type="cross-link" description="Glycyl lysine isopeptide (Lys-Gly) (interchain with G-Cter in SUMO2)" evidence="1">
    <location>
        <position position="114"/>
    </location>
</feature>
<feature type="cross-link" description="Glycyl lysine isopeptide (Lys-Gly) (interchain with G-Cter in SUMO2)" evidence="1">
    <location>
        <position position="124"/>
    </location>
</feature>
<feature type="cross-link" description="Glycyl lysine isopeptide (Lys-Gly) (interchain with G-Cter in SUMO2)" evidence="1">
    <location>
        <position position="140"/>
    </location>
</feature>
<feature type="cross-link" description="Glycyl lysine isopeptide (Lys-Gly) (interchain with G-Cter in SUMO2)" evidence="1">
    <location>
        <position position="454"/>
    </location>
</feature>
<feature type="cross-link" description="Glycyl lysine isopeptide (Lys-Gly) (interchain with G-Cter in SUMO2)" evidence="1">
    <location>
        <position position="601"/>
    </location>
</feature>
<feature type="sequence conflict" description="In Ref. 1; AAH58552." evidence="7" ref="1">
    <original>C</original>
    <variation>F</variation>
    <location>
        <position position="37"/>
    </location>
</feature>
<feature type="sequence conflict" description="In Ref. 1; AAH66848." evidence="7" ref="1">
    <original>T</original>
    <variation>A</variation>
    <location>
        <position position="38"/>
    </location>
</feature>
<feature type="sequence conflict" description="In Ref. 1; AAH66848." evidence="7" ref="1">
    <original>E</original>
    <variation>G</variation>
    <location>
        <position position="112"/>
    </location>
</feature>
<feature type="sequence conflict" description="In Ref. 1; AAH58552." evidence="7" ref="1">
    <location>
        <position position="234"/>
    </location>
</feature>
<feature type="sequence conflict" description="In Ref. 1; AAH66848." evidence="7" ref="1">
    <original>E</original>
    <variation>G</variation>
    <location>
        <position position="359"/>
    </location>
</feature>
<feature type="sequence conflict" description="In Ref. 3; BAC37127." evidence="7" ref="3">
    <original>N</original>
    <variation>T</variation>
    <location>
        <position position="470"/>
    </location>
</feature>
<feature type="sequence conflict" description="In Ref. 1; AAH05786." evidence="7" ref="1">
    <original>V</original>
    <variation>I</variation>
    <location>
        <position position="583"/>
    </location>
</feature>
<feature type="sequence conflict" description="In Ref. 1; AAH05786." evidence="7" ref="1">
    <original>P</original>
    <variation>S</variation>
    <location>
        <position position="695"/>
    </location>
</feature>
<comment type="function">
    <text evidence="5">Through its association with TREX complex components, may participate in the export and post-transcriptional coordination of selected mRNA transcripts, including those required to maintain the metabolic processes in embryonic cells (PubMed:37252988). Binds RNA (PubMed:37252988).</text>
</comment>
<comment type="subunit">
    <text evidence="1 5 6">Interacts with TREX complex components THOC2, DDX39 and POLDIP3; the interactions are ATP-dependent (PubMed:37252988, PubMed:37356722). Interacts with PABPN1; this interaction retains ZC3H11A in nuclear speckles (By similarity). Interacts with KPNA3 (By similarity).</text>
</comment>
<comment type="subcellular location">
    <subcellularLocation>
        <location evidence="5">Nucleus speckle</location>
    </subcellularLocation>
</comment>
<comment type="developmental stage">
    <text evidence="5">Expressed already at the 2-cell stage. In blastocysts, expressed in both the trophectoderm and the inner cell mass (at protein level).</text>
</comment>
<comment type="disruption phenotype">
    <text evidence="5">Homozygous knockout animals show embryonic lethality by 6.5 dpc. Homozygous embryos at expected Mendelian rates are seen at 4.5 dpc. Heterozygous mice do not show any overt phenotype.</text>
</comment>
<comment type="sequence caution" evidence="7">
    <conflict type="miscellaneous discrepancy">
        <sequence resource="EMBL-CDS" id="AAH58552"/>
    </conflict>
    <text>Contaminating sequence. Potential poly-A sequence.</text>
</comment>
<comment type="sequence caution" evidence="7">
    <conflict type="frameshift">
        <sequence resource="EMBL-CDS" id="BAC37127"/>
    </conflict>
</comment>
<comment type="sequence caution" evidence="7">
    <conflict type="erroneous initiation">
        <sequence resource="EMBL-CDS" id="BAC65623"/>
    </conflict>
    <text>Extended N-terminus.</text>
</comment>
<name>ZC11A_MOUSE</name>
<reference key="1">
    <citation type="journal article" date="2004" name="Genome Res.">
        <title>The status, quality, and expansion of the NIH full-length cDNA project: the Mammalian Gene Collection (MGC).</title>
        <authorList>
            <consortium name="The MGC Project Team"/>
        </authorList>
    </citation>
    <scope>NUCLEOTIDE SEQUENCE [LARGE SCALE MRNA]</scope>
    <source>
        <strain>C57BL/6J</strain>
        <strain>CD-1</strain>
        <strain>FVB/N-3</strain>
        <tissue>Kidney</tissue>
        <tissue>Mammary tumor</tissue>
        <tissue>Neural stem cell</tissue>
    </source>
</reference>
<reference key="2">
    <citation type="journal article" date="2003" name="DNA Res.">
        <title>Prediction of the coding sequences of mouse homologues of KIAA gene: II. The complete nucleotide sequences of 400 mouse KIAA-homologous cDNAs identified by screening of terminal sequences of cDNA clones randomly sampled from size-fractionated libraries.</title>
        <authorList>
            <person name="Okazaki N."/>
            <person name="Kikuno R."/>
            <person name="Ohara R."/>
            <person name="Inamoto S."/>
            <person name="Aizawa H."/>
            <person name="Yuasa S."/>
            <person name="Nakajima D."/>
            <person name="Nagase T."/>
            <person name="Ohara O."/>
            <person name="Koga H."/>
        </authorList>
    </citation>
    <scope>NUCLEOTIDE SEQUENCE [LARGE SCALE MRNA] OF 1-493</scope>
    <source>
        <tissue>Brain</tissue>
    </source>
</reference>
<reference key="3">
    <citation type="journal article" date="2005" name="Science">
        <title>The transcriptional landscape of the mammalian genome.</title>
        <authorList>
            <person name="Carninci P."/>
            <person name="Kasukawa T."/>
            <person name="Katayama S."/>
            <person name="Gough J."/>
            <person name="Frith M.C."/>
            <person name="Maeda N."/>
            <person name="Oyama R."/>
            <person name="Ravasi T."/>
            <person name="Lenhard B."/>
            <person name="Wells C."/>
            <person name="Kodzius R."/>
            <person name="Shimokawa K."/>
            <person name="Bajic V.B."/>
            <person name="Brenner S.E."/>
            <person name="Batalov S."/>
            <person name="Forrest A.R."/>
            <person name="Zavolan M."/>
            <person name="Davis M.J."/>
            <person name="Wilming L.G."/>
            <person name="Aidinis V."/>
            <person name="Allen J.E."/>
            <person name="Ambesi-Impiombato A."/>
            <person name="Apweiler R."/>
            <person name="Aturaliya R.N."/>
            <person name="Bailey T.L."/>
            <person name="Bansal M."/>
            <person name="Baxter L."/>
            <person name="Beisel K.W."/>
            <person name="Bersano T."/>
            <person name="Bono H."/>
            <person name="Chalk A.M."/>
            <person name="Chiu K.P."/>
            <person name="Choudhary V."/>
            <person name="Christoffels A."/>
            <person name="Clutterbuck D.R."/>
            <person name="Crowe M.L."/>
            <person name="Dalla E."/>
            <person name="Dalrymple B.P."/>
            <person name="de Bono B."/>
            <person name="Della Gatta G."/>
            <person name="di Bernardo D."/>
            <person name="Down T."/>
            <person name="Engstrom P."/>
            <person name="Fagiolini M."/>
            <person name="Faulkner G."/>
            <person name="Fletcher C.F."/>
            <person name="Fukushima T."/>
            <person name="Furuno M."/>
            <person name="Futaki S."/>
            <person name="Gariboldi M."/>
            <person name="Georgii-Hemming P."/>
            <person name="Gingeras T.R."/>
            <person name="Gojobori T."/>
            <person name="Green R.E."/>
            <person name="Gustincich S."/>
            <person name="Harbers M."/>
            <person name="Hayashi Y."/>
            <person name="Hensch T.K."/>
            <person name="Hirokawa N."/>
            <person name="Hill D."/>
            <person name="Huminiecki L."/>
            <person name="Iacono M."/>
            <person name="Ikeo K."/>
            <person name="Iwama A."/>
            <person name="Ishikawa T."/>
            <person name="Jakt M."/>
            <person name="Kanapin A."/>
            <person name="Katoh M."/>
            <person name="Kawasawa Y."/>
            <person name="Kelso J."/>
            <person name="Kitamura H."/>
            <person name="Kitano H."/>
            <person name="Kollias G."/>
            <person name="Krishnan S.P."/>
            <person name="Kruger A."/>
            <person name="Kummerfeld S.K."/>
            <person name="Kurochkin I.V."/>
            <person name="Lareau L.F."/>
            <person name="Lazarevic D."/>
            <person name="Lipovich L."/>
            <person name="Liu J."/>
            <person name="Liuni S."/>
            <person name="McWilliam S."/>
            <person name="Madan Babu M."/>
            <person name="Madera M."/>
            <person name="Marchionni L."/>
            <person name="Matsuda H."/>
            <person name="Matsuzawa S."/>
            <person name="Miki H."/>
            <person name="Mignone F."/>
            <person name="Miyake S."/>
            <person name="Morris K."/>
            <person name="Mottagui-Tabar S."/>
            <person name="Mulder N."/>
            <person name="Nakano N."/>
            <person name="Nakauchi H."/>
            <person name="Ng P."/>
            <person name="Nilsson R."/>
            <person name="Nishiguchi S."/>
            <person name="Nishikawa S."/>
            <person name="Nori F."/>
            <person name="Ohara O."/>
            <person name="Okazaki Y."/>
            <person name="Orlando V."/>
            <person name="Pang K.C."/>
            <person name="Pavan W.J."/>
            <person name="Pavesi G."/>
            <person name="Pesole G."/>
            <person name="Petrovsky N."/>
            <person name="Piazza S."/>
            <person name="Reed J."/>
            <person name="Reid J.F."/>
            <person name="Ring B.Z."/>
            <person name="Ringwald M."/>
            <person name="Rost B."/>
            <person name="Ruan Y."/>
            <person name="Salzberg S.L."/>
            <person name="Sandelin A."/>
            <person name="Schneider C."/>
            <person name="Schoenbach C."/>
            <person name="Sekiguchi K."/>
            <person name="Semple C.A."/>
            <person name="Seno S."/>
            <person name="Sessa L."/>
            <person name="Sheng Y."/>
            <person name="Shibata Y."/>
            <person name="Shimada H."/>
            <person name="Shimada K."/>
            <person name="Silva D."/>
            <person name="Sinclair B."/>
            <person name="Sperling S."/>
            <person name="Stupka E."/>
            <person name="Sugiura K."/>
            <person name="Sultana R."/>
            <person name="Takenaka Y."/>
            <person name="Taki K."/>
            <person name="Tammoja K."/>
            <person name="Tan S.L."/>
            <person name="Tang S."/>
            <person name="Taylor M.S."/>
            <person name="Tegner J."/>
            <person name="Teichmann S.A."/>
            <person name="Ueda H.R."/>
            <person name="van Nimwegen E."/>
            <person name="Verardo R."/>
            <person name="Wei C.L."/>
            <person name="Yagi K."/>
            <person name="Yamanishi H."/>
            <person name="Zabarovsky E."/>
            <person name="Zhu S."/>
            <person name="Zimmer A."/>
            <person name="Hide W."/>
            <person name="Bult C."/>
            <person name="Grimmond S.M."/>
            <person name="Teasdale R.D."/>
            <person name="Liu E.T."/>
            <person name="Brusic V."/>
            <person name="Quackenbush J."/>
            <person name="Wahlestedt C."/>
            <person name="Mattick J.S."/>
            <person name="Hume D.A."/>
            <person name="Kai C."/>
            <person name="Sasaki D."/>
            <person name="Tomaru Y."/>
            <person name="Fukuda S."/>
            <person name="Kanamori-Katayama M."/>
            <person name="Suzuki M."/>
            <person name="Aoki J."/>
            <person name="Arakawa T."/>
            <person name="Iida J."/>
            <person name="Imamura K."/>
            <person name="Itoh M."/>
            <person name="Kato T."/>
            <person name="Kawaji H."/>
            <person name="Kawagashira N."/>
            <person name="Kawashima T."/>
            <person name="Kojima M."/>
            <person name="Kondo S."/>
            <person name="Konno H."/>
            <person name="Nakano K."/>
            <person name="Ninomiya N."/>
            <person name="Nishio T."/>
            <person name="Okada M."/>
            <person name="Plessy C."/>
            <person name="Shibata K."/>
            <person name="Shiraki T."/>
            <person name="Suzuki S."/>
            <person name="Tagami M."/>
            <person name="Waki K."/>
            <person name="Watahiki A."/>
            <person name="Okamura-Oho Y."/>
            <person name="Suzuki H."/>
            <person name="Kawai J."/>
            <person name="Hayashizaki Y."/>
        </authorList>
    </citation>
    <scope>NUCLEOTIDE SEQUENCE [LARGE SCALE MRNA] OF 1-493</scope>
    <source>
        <strain>C57BL/6J</strain>
        <tissue>Medulla oblongata</tissue>
    </source>
</reference>
<reference key="4">
    <citation type="journal article" date="2010" name="Cell">
        <title>A tissue-specific atlas of mouse protein phosphorylation and expression.</title>
        <authorList>
            <person name="Huttlin E.L."/>
            <person name="Jedrychowski M.P."/>
            <person name="Elias J.E."/>
            <person name="Goswami T."/>
            <person name="Rad R."/>
            <person name="Beausoleil S.A."/>
            <person name="Villen J."/>
            <person name="Haas W."/>
            <person name="Sowa M.E."/>
            <person name="Gygi S.P."/>
        </authorList>
    </citation>
    <scope>PHOSPHORYLATION [LARGE SCALE ANALYSIS] AT SER-132; SER-149 AND SER-171</scope>
    <scope>IDENTIFICATION BY MASS SPECTROMETRY [LARGE SCALE ANALYSIS]</scope>
    <source>
        <tissue>Kidney</tissue>
        <tissue>Pancreas</tissue>
        <tissue>Spleen</tissue>
        <tissue>Testis</tissue>
    </source>
</reference>
<reference key="5">
    <citation type="journal article" date="2023" name="J. Biol. Chem.">
        <title>The RNA-binding protein ZC3H11A interacts with the nuclear poly(A)-binding protein PABPN1 and alters polyadenylation of viral transcripts.</title>
        <authorList>
            <person name="Kases K."/>
            <person name="Schubert E."/>
            <person name="Hajikhezri Z."/>
            <person name="Larsson M."/>
            <person name="Devi P."/>
            <person name="Darweesh M."/>
            <person name="Andersson L."/>
            <person name="Akusjaervi G."/>
            <person name="Punga T."/>
            <person name="Younis S."/>
        </authorList>
    </citation>
    <scope>IDENTIFICATION IN THE TREX COMPLEX</scope>
</reference>
<reference key="6">
    <citation type="journal article" date="2023" name="Proc. Natl. Acad. Sci. U.S.A.">
        <title>Ablation of ZC3H11A causes early embryonic lethality and dysregulation of metabolic processes.</title>
        <authorList>
            <person name="Younis S."/>
            <person name="Jouneau A."/>
            <person name="Larsson M."/>
            <person name="Oudin J.F."/>
            <person name="Adenot P."/>
            <person name="Omar J."/>
            <person name="Brochard V."/>
            <person name="Andersson L."/>
        </authorList>
    </citation>
    <scope>FUNCTION</scope>
    <scope>INTERACTION WITH THOC2</scope>
    <scope>SUBCELLULAR LOCATION</scope>
    <scope>DEVELOPMENTAL STAGE</scope>
    <scope>DISRUPTION PHENOTYPE</scope>
</reference>
<organism>
    <name type="scientific">Mus musculus</name>
    <name type="common">Mouse</name>
    <dbReference type="NCBI Taxonomy" id="10090"/>
    <lineage>
        <taxon>Eukaryota</taxon>
        <taxon>Metazoa</taxon>
        <taxon>Chordata</taxon>
        <taxon>Craniata</taxon>
        <taxon>Vertebrata</taxon>
        <taxon>Euteleostomi</taxon>
        <taxon>Mammalia</taxon>
        <taxon>Eutheria</taxon>
        <taxon>Euarchontoglires</taxon>
        <taxon>Glires</taxon>
        <taxon>Rodentia</taxon>
        <taxon>Myomorpha</taxon>
        <taxon>Muroidea</taxon>
        <taxon>Muridae</taxon>
        <taxon>Murinae</taxon>
        <taxon>Mus</taxon>
        <taxon>Mus</taxon>
    </lineage>
</organism>
<accession>Q6NZF1</accession>
<accession>Q6NXW9</accession>
<accession>Q6PDR6</accession>
<accession>Q80TU7</accession>
<accession>Q8C5L5</accession>
<accession>Q99JN6</accession>
<sequence>MPNQGEDCYFYFYSTCAKGDSCPFRHCEAALGNETVCTLWQEGRCFRQVCRFRHMEIDKKRSEIPCYWENQPVGCQKLNCAFHHTRSRYVDGLFLPPSKTVLPTVPESQEEEVKTSQLTVQQSKLSVQSNPSPQLRSVMKVESSENVPSPTHPPVVINAADDDEDDDDQFSEEGDESKTPALQPSPDVHNGLRVASARKPGVSLKQGECLNFGIKTLEEIKSKKMKEKSKKQGEGSSGVSSVLQQPQPNPGPEKENVRTVVRMVTLSSKPEEPLVRLSLSERLGKRKLSVGGDSDPPLKRSLAQRLGKKVESPETNIDKAPKKERGHKAGEIHVKTLEEILLERASQKRGELQTKLKAEEPSGADDSPSGTKSSSSVRIKTFSEVLAEKKHRQQEMERQKSKKDTSCLTLTDDTEMKKTVSLPTVAVSKGQPEEPAGRARSMQEVHIKTLEEIKLEKALRVQQSSESSGNSRPQAEAAPGTKRLLRITKRAGVKEEKKCGLEDSGDPPQSSVTKMEANETSDETISDPTKLAVNRCDTVKEKHTQRLQERGASQKEKAALSSVRGDEASSYTRVAGKPVLTAVSGVTRHLAKRLPVESSQKGEVETSGIGDSILNVKCAAQTLEKRSKVKPKVNVKPSVVKVVSAPKLAPKRKAVEMHSAVIAAVKPLSSSSVLQESPTKKAAVAVVPLLSEDKPVTMSETENPKDSSVLSSAQAASEPLLPEGSGPSSSQTATKPRRLSSASTGKPPLSVEDDFEKLIWEISGGKLEAEIDLDPGKDEDDLLLELSEMIDS</sequence>
<protein>
    <recommendedName>
        <fullName>Zinc finger CCCH domain-containing protein 11A</fullName>
    </recommendedName>
</protein>
<dbReference type="EMBL" id="BC066163">
    <property type="protein sequence ID" value="AAH66163.1"/>
    <property type="molecule type" value="mRNA"/>
</dbReference>
<dbReference type="EMBL" id="BC005786">
    <property type="protein sequence ID" value="AAH05786.1"/>
    <property type="molecule type" value="mRNA"/>
</dbReference>
<dbReference type="EMBL" id="BC066848">
    <property type="protein sequence ID" value="AAH66848.1"/>
    <property type="molecule type" value="mRNA"/>
</dbReference>
<dbReference type="EMBL" id="BC058552">
    <property type="protein sequence ID" value="AAH58552.1"/>
    <property type="status" value="ALT_SEQ"/>
    <property type="molecule type" value="mRNA"/>
</dbReference>
<dbReference type="EMBL" id="AK122341">
    <property type="protein sequence ID" value="BAC65623.4"/>
    <property type="status" value="ALT_INIT"/>
    <property type="molecule type" value="mRNA"/>
</dbReference>
<dbReference type="EMBL" id="AK078105">
    <property type="protein sequence ID" value="BAC37127.1"/>
    <property type="status" value="ALT_FRAME"/>
    <property type="molecule type" value="mRNA"/>
</dbReference>
<dbReference type="CCDS" id="CCDS15297.1"/>
<dbReference type="RefSeq" id="NP_001263696.1">
    <property type="nucleotide sequence ID" value="NM_001276767.1"/>
</dbReference>
<dbReference type="RefSeq" id="NP_001344157.1">
    <property type="nucleotide sequence ID" value="NM_001357228.1"/>
</dbReference>
<dbReference type="RefSeq" id="NP_653113.4">
    <property type="nucleotide sequence ID" value="NM_144530.6"/>
</dbReference>
<dbReference type="RefSeq" id="XP_011246375.1">
    <property type="nucleotide sequence ID" value="XM_011248073.2"/>
</dbReference>
<dbReference type="RefSeq" id="XP_011246376.1">
    <property type="nucleotide sequence ID" value="XM_011248074.2"/>
</dbReference>
<dbReference type="RefSeq" id="XP_011246377.1">
    <property type="nucleotide sequence ID" value="XM_011248075.1"/>
</dbReference>
<dbReference type="RefSeq" id="XP_011246378.1">
    <property type="nucleotide sequence ID" value="XM_011248076.1"/>
</dbReference>
<dbReference type="BioGRID" id="214147">
    <property type="interactions" value="9"/>
</dbReference>
<dbReference type="FunCoup" id="Q6NZF1">
    <property type="interactions" value="767"/>
</dbReference>
<dbReference type="STRING" id="10090.ENSMUSP00000027736"/>
<dbReference type="GlyGen" id="Q6NZF1">
    <property type="glycosylation" value="1 site, 1 O-linked glycan (1 site)"/>
</dbReference>
<dbReference type="iPTMnet" id="Q6NZF1"/>
<dbReference type="PhosphoSitePlus" id="Q6NZF1"/>
<dbReference type="SwissPalm" id="Q6NZF1"/>
<dbReference type="jPOST" id="Q6NZF1"/>
<dbReference type="ProteomicsDB" id="302109"/>
<dbReference type="Pumba" id="Q6NZF1"/>
<dbReference type="DNASU" id="70579"/>
<dbReference type="Ensembl" id="ENSMUST00000191896.6">
    <property type="protein sequence ID" value="ENSMUSP00000141255.2"/>
    <property type="gene ID" value="ENSMUSG00000102976.7"/>
</dbReference>
<dbReference type="GeneID" id="70579"/>
<dbReference type="KEGG" id="mmu:70579"/>
<dbReference type="UCSC" id="uc007cqm.1">
    <property type="organism name" value="mouse"/>
</dbReference>
<dbReference type="AGR" id="MGI:1917829"/>
<dbReference type="CTD" id="9877"/>
<dbReference type="MGI" id="MGI:1917829">
    <property type="gene designation" value="Zc3h11a"/>
</dbReference>
<dbReference type="VEuPathDB" id="HostDB:ENSMUSG00000102976"/>
<dbReference type="VEuPathDB" id="HostDB:ENSMUSG00000116275"/>
<dbReference type="GeneTree" id="ENSGT00920000149095"/>
<dbReference type="HOGENOM" id="CLU_019514_1_0_1"/>
<dbReference type="InParanoid" id="Q6NZF1"/>
<dbReference type="OMA" id="NVRPSVM"/>
<dbReference type="OrthoDB" id="5395350at2759"/>
<dbReference type="PhylomeDB" id="Q6NZF1"/>
<dbReference type="TreeFam" id="TF335608"/>
<dbReference type="Reactome" id="R-MMU-159236">
    <property type="pathway name" value="Transport of Mature mRNA derived from an Intron-Containing Transcript"/>
</dbReference>
<dbReference type="Reactome" id="R-MMU-72187">
    <property type="pathway name" value="mRNA 3'-end processing"/>
</dbReference>
<dbReference type="Reactome" id="R-MMU-73856">
    <property type="pathway name" value="RNA Polymerase II Transcription Termination"/>
</dbReference>
<dbReference type="BioGRID-ORCS" id="70579">
    <property type="hits" value="6 hits in 46 CRISPR screens"/>
</dbReference>
<dbReference type="ChiTaRS" id="Zc3h11a">
    <property type="organism name" value="mouse"/>
</dbReference>
<dbReference type="PRO" id="PR:Q6NZF1"/>
<dbReference type="Proteomes" id="UP000000589">
    <property type="component" value="Chromosome 1"/>
</dbReference>
<dbReference type="RNAct" id="Q6NZF1">
    <property type="molecule type" value="protein"/>
</dbReference>
<dbReference type="Bgee" id="ENSMUSG00000102976">
    <property type="expression patterns" value="Expressed in undifferentiated genital tubercle and 192 other cell types or tissues"/>
</dbReference>
<dbReference type="ExpressionAtlas" id="Q6NZF1">
    <property type="expression patterns" value="baseline and differential"/>
</dbReference>
<dbReference type="GO" id="GO:0016607">
    <property type="term" value="C:nuclear speck"/>
    <property type="evidence" value="ECO:0007669"/>
    <property type="project" value="UniProtKB-SubCell"/>
</dbReference>
<dbReference type="GO" id="GO:0008270">
    <property type="term" value="F:zinc ion binding"/>
    <property type="evidence" value="ECO:0007669"/>
    <property type="project" value="UniProtKB-KW"/>
</dbReference>
<dbReference type="GO" id="GO:0016973">
    <property type="term" value="P:poly(A)+ mRNA export from nucleus"/>
    <property type="evidence" value="ECO:0000250"/>
    <property type="project" value="UniProtKB"/>
</dbReference>
<dbReference type="FunFam" id="4.10.1000.10:FF:000024">
    <property type="entry name" value="Zinc finger CCCH domain-containing protein 11A"/>
    <property type="match status" value="1"/>
</dbReference>
<dbReference type="Gene3D" id="4.10.1000.10">
    <property type="entry name" value="Zinc finger, CCCH-type"/>
    <property type="match status" value="1"/>
</dbReference>
<dbReference type="InterPro" id="IPR041686">
    <property type="entry name" value="Znf-CCCH_3"/>
</dbReference>
<dbReference type="InterPro" id="IPR000571">
    <property type="entry name" value="Znf_CCCH"/>
</dbReference>
<dbReference type="PANTHER" id="PTHR15725:SF2">
    <property type="entry name" value="ZINC FINGER CCCH DOMAIN-CONTAINING PROTEIN 11A"/>
    <property type="match status" value="1"/>
</dbReference>
<dbReference type="PANTHER" id="PTHR15725">
    <property type="entry name" value="ZN-FINGER, C-X8-C-X5-C-X3-H TYPE-CONTAINING"/>
    <property type="match status" value="1"/>
</dbReference>
<dbReference type="Pfam" id="PF15663">
    <property type="entry name" value="zf-CCCH_3"/>
    <property type="match status" value="1"/>
</dbReference>
<dbReference type="SMART" id="SM00356">
    <property type="entry name" value="ZnF_C3H1"/>
    <property type="match status" value="3"/>
</dbReference>
<dbReference type="PROSITE" id="PS50103">
    <property type="entry name" value="ZF_C3H1"/>
    <property type="match status" value="3"/>
</dbReference>
<keyword id="KW-0175">Coiled coil</keyword>
<keyword id="KW-1017">Isopeptide bond</keyword>
<keyword id="KW-0479">Metal-binding</keyword>
<keyword id="KW-0509">mRNA transport</keyword>
<keyword id="KW-0539">Nucleus</keyword>
<keyword id="KW-0597">Phosphoprotein</keyword>
<keyword id="KW-1185">Reference proteome</keyword>
<keyword id="KW-0677">Repeat</keyword>
<keyword id="KW-0813">Transport</keyword>
<keyword id="KW-0832">Ubl conjugation</keyword>
<keyword id="KW-0862">Zinc</keyword>
<keyword id="KW-0863">Zinc-finger</keyword>
<proteinExistence type="evidence at protein level"/>
<gene>
    <name type="primary">Zc3h11a</name>
    <name type="synonym">Kiaa0663</name>
</gene>
<evidence type="ECO:0000250" key="1">
    <source>
        <dbReference type="UniProtKB" id="O75152"/>
    </source>
</evidence>
<evidence type="ECO:0000255" key="2"/>
<evidence type="ECO:0000255" key="3">
    <source>
        <dbReference type="PROSITE-ProRule" id="PRU00723"/>
    </source>
</evidence>
<evidence type="ECO:0000256" key="4">
    <source>
        <dbReference type="SAM" id="MobiDB-lite"/>
    </source>
</evidence>
<evidence type="ECO:0000269" key="5">
    <source>
    </source>
</evidence>
<evidence type="ECO:0000269" key="6">
    <source>
    </source>
</evidence>
<evidence type="ECO:0000305" key="7"/>
<evidence type="ECO:0007744" key="8">
    <source>
    </source>
</evidence>